<reference key="1">
    <citation type="journal article" date="2010" name="Genome Biol. Evol.">
        <title>Continuing evolution of Burkholderia mallei through genome reduction and large-scale rearrangements.</title>
        <authorList>
            <person name="Losada L."/>
            <person name="Ronning C.M."/>
            <person name="DeShazer D."/>
            <person name="Woods D."/>
            <person name="Fedorova N."/>
            <person name="Kim H.S."/>
            <person name="Shabalina S.A."/>
            <person name="Pearson T.R."/>
            <person name="Brinkac L."/>
            <person name="Tan P."/>
            <person name="Nandi T."/>
            <person name="Crabtree J."/>
            <person name="Badger J."/>
            <person name="Beckstrom-Sternberg S."/>
            <person name="Saqib M."/>
            <person name="Schutzer S.E."/>
            <person name="Keim P."/>
            <person name="Nierman W.C."/>
        </authorList>
    </citation>
    <scope>NUCLEOTIDE SEQUENCE [LARGE SCALE GENOMIC DNA]</scope>
    <source>
        <strain>1710b</strain>
    </source>
</reference>
<proteinExistence type="inferred from homology"/>
<accession>Q3JPX1</accession>
<dbReference type="EC" id="2.1.1.222" evidence="1"/>
<dbReference type="EC" id="2.1.1.64" evidence="1"/>
<dbReference type="EMBL" id="CP000124">
    <property type="protein sequence ID" value="ABA49842.1"/>
    <property type="molecule type" value="Genomic_DNA"/>
</dbReference>
<dbReference type="RefSeq" id="WP_004532296.1">
    <property type="nucleotide sequence ID" value="NC_007434.1"/>
</dbReference>
<dbReference type="SMR" id="Q3JPX1"/>
<dbReference type="EnsemblBacteria" id="ABA49842">
    <property type="protein sequence ID" value="ABA49842"/>
    <property type="gene ID" value="BURPS1710b_3003"/>
</dbReference>
<dbReference type="GeneID" id="93061109"/>
<dbReference type="KEGG" id="bpm:BURPS1710b_3003"/>
<dbReference type="HOGENOM" id="CLU_042432_5_0_4"/>
<dbReference type="UniPathway" id="UPA00232"/>
<dbReference type="Proteomes" id="UP000002700">
    <property type="component" value="Chromosome I"/>
</dbReference>
<dbReference type="GO" id="GO:0102208">
    <property type="term" value="F:2-polyprenyl-6-hydroxyphenol methylase activity"/>
    <property type="evidence" value="ECO:0007669"/>
    <property type="project" value="UniProtKB-EC"/>
</dbReference>
<dbReference type="GO" id="GO:0061542">
    <property type="term" value="F:3-demethylubiquinol 3-O-methyltransferase activity"/>
    <property type="evidence" value="ECO:0007669"/>
    <property type="project" value="UniProtKB-UniRule"/>
</dbReference>
<dbReference type="GO" id="GO:0010420">
    <property type="term" value="F:polyprenyldihydroxybenzoate methyltransferase activity"/>
    <property type="evidence" value="ECO:0007669"/>
    <property type="project" value="InterPro"/>
</dbReference>
<dbReference type="GO" id="GO:0032259">
    <property type="term" value="P:methylation"/>
    <property type="evidence" value="ECO:0007669"/>
    <property type="project" value="UniProtKB-KW"/>
</dbReference>
<dbReference type="CDD" id="cd02440">
    <property type="entry name" value="AdoMet_MTases"/>
    <property type="match status" value="1"/>
</dbReference>
<dbReference type="FunFam" id="3.40.50.150:FF:000028">
    <property type="entry name" value="Ubiquinone biosynthesis O-methyltransferase"/>
    <property type="match status" value="1"/>
</dbReference>
<dbReference type="Gene3D" id="3.40.50.150">
    <property type="entry name" value="Vaccinia Virus protein VP39"/>
    <property type="match status" value="1"/>
</dbReference>
<dbReference type="HAMAP" id="MF_00472">
    <property type="entry name" value="UbiG"/>
    <property type="match status" value="1"/>
</dbReference>
<dbReference type="InterPro" id="IPR029063">
    <property type="entry name" value="SAM-dependent_MTases_sf"/>
</dbReference>
<dbReference type="InterPro" id="IPR010233">
    <property type="entry name" value="UbiG_MeTrfase"/>
</dbReference>
<dbReference type="NCBIfam" id="TIGR01983">
    <property type="entry name" value="UbiG"/>
    <property type="match status" value="1"/>
</dbReference>
<dbReference type="PANTHER" id="PTHR43464">
    <property type="entry name" value="METHYLTRANSFERASE"/>
    <property type="match status" value="1"/>
</dbReference>
<dbReference type="PANTHER" id="PTHR43464:SF19">
    <property type="entry name" value="UBIQUINONE BIOSYNTHESIS O-METHYLTRANSFERASE, MITOCHONDRIAL"/>
    <property type="match status" value="1"/>
</dbReference>
<dbReference type="Pfam" id="PF13489">
    <property type="entry name" value="Methyltransf_23"/>
    <property type="match status" value="1"/>
</dbReference>
<dbReference type="SUPFAM" id="SSF53335">
    <property type="entry name" value="S-adenosyl-L-methionine-dependent methyltransferases"/>
    <property type="match status" value="1"/>
</dbReference>
<protein>
    <recommendedName>
        <fullName evidence="1">Ubiquinone biosynthesis O-methyltransferase</fullName>
    </recommendedName>
    <alternativeName>
        <fullName evidence="1">2-polyprenyl-6-hydroxyphenol methylase</fullName>
        <ecNumber evidence="1">2.1.1.222</ecNumber>
    </alternativeName>
    <alternativeName>
        <fullName evidence="1">3-demethylubiquinone 3-O-methyltransferase</fullName>
        <ecNumber evidence="1">2.1.1.64</ecNumber>
    </alternativeName>
</protein>
<evidence type="ECO:0000255" key="1">
    <source>
        <dbReference type="HAMAP-Rule" id="MF_00472"/>
    </source>
</evidence>
<comment type="function">
    <text evidence="1">O-methyltransferase that catalyzes the 2 O-methylation steps in the ubiquinone biosynthetic pathway.</text>
</comment>
<comment type="catalytic activity">
    <reaction evidence="1">
        <text>a 3-demethylubiquinol + S-adenosyl-L-methionine = a ubiquinol + S-adenosyl-L-homocysteine + H(+)</text>
        <dbReference type="Rhea" id="RHEA:44380"/>
        <dbReference type="Rhea" id="RHEA-COMP:9566"/>
        <dbReference type="Rhea" id="RHEA-COMP:10914"/>
        <dbReference type="ChEBI" id="CHEBI:15378"/>
        <dbReference type="ChEBI" id="CHEBI:17976"/>
        <dbReference type="ChEBI" id="CHEBI:57856"/>
        <dbReference type="ChEBI" id="CHEBI:59789"/>
        <dbReference type="ChEBI" id="CHEBI:84422"/>
        <dbReference type="EC" id="2.1.1.64"/>
    </reaction>
</comment>
<comment type="catalytic activity">
    <reaction evidence="1">
        <text>a 3-(all-trans-polyprenyl)benzene-1,2-diol + S-adenosyl-L-methionine = a 2-methoxy-6-(all-trans-polyprenyl)phenol + S-adenosyl-L-homocysteine + H(+)</text>
        <dbReference type="Rhea" id="RHEA:31411"/>
        <dbReference type="Rhea" id="RHEA-COMP:9550"/>
        <dbReference type="Rhea" id="RHEA-COMP:9551"/>
        <dbReference type="ChEBI" id="CHEBI:15378"/>
        <dbReference type="ChEBI" id="CHEBI:57856"/>
        <dbReference type="ChEBI" id="CHEBI:59789"/>
        <dbReference type="ChEBI" id="CHEBI:62729"/>
        <dbReference type="ChEBI" id="CHEBI:62731"/>
        <dbReference type="EC" id="2.1.1.222"/>
    </reaction>
</comment>
<comment type="pathway">
    <text evidence="1">Cofactor biosynthesis; ubiquinone biosynthesis.</text>
</comment>
<comment type="similarity">
    <text evidence="1">Belongs to the methyltransferase superfamily. UbiG/COQ3 family.</text>
</comment>
<sequence length="232" mass="25206">MTNADPHELQKFSDLAHKWWDPNAEFKPLHDLNPVRLSWIDAHAHLPGKRVVDIGCGGGILSESMASLGAQVKGIDLATEALGVADLHSLESGVSVDYEAIAAEALAAREPGAYDVVTCMEMLEHVPSPANIVAACATLVKPGGWVFFSTLNRNLKSYLLAVIGAEYIAQMLPKGTHDYARFIRPSELARFVREAGLQMVEIKGIAYHPLAKRFALSNDTDVNYLVACRRGA</sequence>
<gene>
    <name evidence="1" type="primary">ubiG</name>
    <name type="ordered locus">BURPS1710b_3003</name>
</gene>
<keyword id="KW-0489">Methyltransferase</keyword>
<keyword id="KW-0949">S-adenosyl-L-methionine</keyword>
<keyword id="KW-0808">Transferase</keyword>
<keyword id="KW-0831">Ubiquinone biosynthesis</keyword>
<name>UBIG_BURP1</name>
<feature type="chain" id="PRO_0000241704" description="Ubiquinone biosynthesis O-methyltransferase">
    <location>
        <begin position="1"/>
        <end position="232"/>
    </location>
</feature>
<feature type="binding site" evidence="1">
    <location>
        <position position="36"/>
    </location>
    <ligand>
        <name>S-adenosyl-L-methionine</name>
        <dbReference type="ChEBI" id="CHEBI:59789"/>
    </ligand>
</feature>
<feature type="binding site" evidence="1">
    <location>
        <position position="55"/>
    </location>
    <ligand>
        <name>S-adenosyl-L-methionine</name>
        <dbReference type="ChEBI" id="CHEBI:59789"/>
    </ligand>
</feature>
<feature type="binding site" evidence="1">
    <location>
        <position position="76"/>
    </location>
    <ligand>
        <name>S-adenosyl-L-methionine</name>
        <dbReference type="ChEBI" id="CHEBI:59789"/>
    </ligand>
</feature>
<feature type="binding site" evidence="1">
    <location>
        <position position="120"/>
    </location>
    <ligand>
        <name>S-adenosyl-L-methionine</name>
        <dbReference type="ChEBI" id="CHEBI:59789"/>
    </ligand>
</feature>
<organism>
    <name type="scientific">Burkholderia pseudomallei (strain 1710b)</name>
    <dbReference type="NCBI Taxonomy" id="320372"/>
    <lineage>
        <taxon>Bacteria</taxon>
        <taxon>Pseudomonadati</taxon>
        <taxon>Pseudomonadota</taxon>
        <taxon>Betaproteobacteria</taxon>
        <taxon>Burkholderiales</taxon>
        <taxon>Burkholderiaceae</taxon>
        <taxon>Burkholderia</taxon>
        <taxon>pseudomallei group</taxon>
    </lineage>
</organism>